<protein>
    <recommendedName>
        <fullName evidence="2">Choline transporter-like 2</fullName>
    </recommendedName>
</protein>
<accession>Q7PRJ0</accession>
<gene>
    <name evidence="2" type="primary">Ctl2</name>
    <name type="ORF">AGAP010343</name>
</gene>
<organism>
    <name type="scientific">Anopheles gambiae</name>
    <name type="common">African malaria mosquito</name>
    <dbReference type="NCBI Taxonomy" id="7165"/>
    <lineage>
        <taxon>Eukaryota</taxon>
        <taxon>Metazoa</taxon>
        <taxon>Ecdysozoa</taxon>
        <taxon>Arthropoda</taxon>
        <taxon>Hexapoda</taxon>
        <taxon>Insecta</taxon>
        <taxon>Pterygota</taxon>
        <taxon>Neoptera</taxon>
        <taxon>Endopterygota</taxon>
        <taxon>Diptera</taxon>
        <taxon>Nematocera</taxon>
        <taxon>Culicoidea</taxon>
        <taxon>Culicidae</taxon>
        <taxon>Anophelinae</taxon>
        <taxon>Anopheles</taxon>
    </lineage>
</organism>
<name>CTL12_ANOGA</name>
<keyword id="KW-0325">Glycoprotein</keyword>
<keyword id="KW-0472">Membrane</keyword>
<keyword id="KW-1185">Reference proteome</keyword>
<keyword id="KW-0812">Transmembrane</keyword>
<keyword id="KW-1133">Transmembrane helix</keyword>
<sequence length="790" mass="89735">MGLCCGSTDRVTKYSKEDIQQPTESEPLKYDPDFKGPLSKRSCTDLPCLFLFVTFLCAWGYVAYYAVQHGDLNRLLVPIDSDGRKCGVDSEVRDEPYLVFFNITECAKIDVPISGCSTTQVCVSQCPNQDFDFESANCNPSNVNEIRSKLICKQNVKKSDLTTCQIIRQYIKSQRCAQTMQKSTPLVNRCVSNIPEGQCTLIPKQFRQQPPITSTKFQTSAEQCKEQRELENILEEKISKLQSFLARYVNNLISVLTKNNSVHQLKYLNYHLVLQTLKKGNLKHNPLIITPYLITIHNITVLLTFQMIVEDILESWRMILVFIACSVLASLILIAMLRWIAKPLVWISIIGVITALSYGVYYSFRQYQQIRANPVAAHVNVSPNLSSLVNSWFKSDQTWLWILIALSVILIVLLLVVLVLRKRIVIAIALLKEGSKAVSASFSTVFFPLVPWILQAVVIVFSLLVLLFLASIGVPVYKVNGLNSSLTCVCTNGYMEGDICDPVAFNENCRDTSRIYDQERCLDAACHFQEVDTPGIVRFFHALNVIGFFWCICFVSAFSEMVLAFTFATWYWTRQKSRLPFFVLTRGVTHTVYYHLGTLAFGSLIIAICKIIRAILEYVDHKLKRYDNGFTRAVLCCCRCFFWCLESFLKFLNRNAYIMCAIYGKNFCSSAKDAFSLLTRNVLRVIALDKVTGFLFFLSKLLLASGMAAVTYTYFDSDLPKMQLNYPFVPAVLVFIGTFIIASIFFSVYSVAVDTLFLCFLEDIERNDGSAERPFYMSRGLQKILGKKQK</sequence>
<evidence type="ECO:0000250" key="1"/>
<evidence type="ECO:0000250" key="2">
    <source>
        <dbReference type="UniProtKB" id="Q9VAP3"/>
    </source>
</evidence>
<evidence type="ECO:0000255" key="3"/>
<evidence type="ECO:0000305" key="4"/>
<reference key="1">
    <citation type="journal article" date="2002" name="Science">
        <title>The genome sequence of the malaria mosquito Anopheles gambiae.</title>
        <authorList>
            <person name="Holt R.A."/>
            <person name="Subramanian G.M."/>
            <person name="Halpern A."/>
            <person name="Sutton G.G."/>
            <person name="Charlab R."/>
            <person name="Nusskern D.R."/>
            <person name="Wincker P."/>
            <person name="Clark A.G."/>
            <person name="Ribeiro J.M.C."/>
            <person name="Wides R."/>
            <person name="Salzberg S.L."/>
            <person name="Loftus B.J."/>
            <person name="Yandell M.D."/>
            <person name="Majoros W.H."/>
            <person name="Rusch D.B."/>
            <person name="Lai Z."/>
            <person name="Kraft C.L."/>
            <person name="Abril J.F."/>
            <person name="Anthouard V."/>
            <person name="Arensburger P."/>
            <person name="Atkinson P.W."/>
            <person name="Baden H."/>
            <person name="de Berardinis V."/>
            <person name="Baldwin D."/>
            <person name="Benes V."/>
            <person name="Biedler J."/>
            <person name="Blass C."/>
            <person name="Bolanos R."/>
            <person name="Boscus D."/>
            <person name="Barnstead M."/>
            <person name="Cai S."/>
            <person name="Center A."/>
            <person name="Chaturverdi K."/>
            <person name="Christophides G.K."/>
            <person name="Chrystal M.A.M."/>
            <person name="Clamp M."/>
            <person name="Cravchik A."/>
            <person name="Curwen V."/>
            <person name="Dana A."/>
            <person name="Delcher A."/>
            <person name="Dew I."/>
            <person name="Evans C.A."/>
            <person name="Flanigan M."/>
            <person name="Grundschober-Freimoser A."/>
            <person name="Friedli L."/>
            <person name="Gu Z."/>
            <person name="Guan P."/>
            <person name="Guigo R."/>
            <person name="Hillenmeyer M.E."/>
            <person name="Hladun S.L."/>
            <person name="Hogan J.R."/>
            <person name="Hong Y.S."/>
            <person name="Hoover J."/>
            <person name="Jaillon O."/>
            <person name="Ke Z."/>
            <person name="Kodira C.D."/>
            <person name="Kokoza E."/>
            <person name="Koutsos A."/>
            <person name="Letunic I."/>
            <person name="Levitsky A.A."/>
            <person name="Liang Y."/>
            <person name="Lin J.-J."/>
            <person name="Lobo N.F."/>
            <person name="Lopez J.R."/>
            <person name="Malek J.A."/>
            <person name="McIntosh T.C."/>
            <person name="Meister S."/>
            <person name="Miller J.R."/>
            <person name="Mobarry C."/>
            <person name="Mongin E."/>
            <person name="Murphy S.D."/>
            <person name="O'Brochta D.A."/>
            <person name="Pfannkoch C."/>
            <person name="Qi R."/>
            <person name="Regier M.A."/>
            <person name="Remington K."/>
            <person name="Shao H."/>
            <person name="Sharakhova M.V."/>
            <person name="Sitter C.D."/>
            <person name="Shetty J."/>
            <person name="Smith T.J."/>
            <person name="Strong R."/>
            <person name="Sun J."/>
            <person name="Thomasova D."/>
            <person name="Ton L.Q."/>
            <person name="Topalis P."/>
            <person name="Tu Z.J."/>
            <person name="Unger M.F."/>
            <person name="Walenz B."/>
            <person name="Wang A.H."/>
            <person name="Wang J."/>
            <person name="Wang M."/>
            <person name="Wang X."/>
            <person name="Woodford K.J."/>
            <person name="Wortman J.R."/>
            <person name="Wu M."/>
            <person name="Yao A."/>
            <person name="Zdobnov E.M."/>
            <person name="Zhang H."/>
            <person name="Zhao Q."/>
            <person name="Zhao S."/>
            <person name="Zhu S.C."/>
            <person name="Zhimulev I."/>
            <person name="Coluzzi M."/>
            <person name="della Torre A."/>
            <person name="Roth C.W."/>
            <person name="Louis C."/>
            <person name="Kalush F."/>
            <person name="Mural R.J."/>
            <person name="Myers E.W."/>
            <person name="Adams M.D."/>
            <person name="Smith H.O."/>
            <person name="Broder S."/>
            <person name="Gardner M.J."/>
            <person name="Fraser C.M."/>
            <person name="Birney E."/>
            <person name="Bork P."/>
            <person name="Brey P.T."/>
            <person name="Venter J.C."/>
            <person name="Weissenbach J."/>
            <person name="Kafatos F.C."/>
            <person name="Collins F.H."/>
            <person name="Hoffman S.L."/>
        </authorList>
    </citation>
    <scope>NUCLEOTIDE SEQUENCE [LARGE SCALE GENOMIC DNA]</scope>
    <source>
        <strain>PEST</strain>
    </source>
</reference>
<comment type="subcellular location">
    <subcellularLocation>
        <location evidence="1">Membrane</location>
        <topology evidence="1">Multi-pass membrane protein</topology>
    </subcellularLocation>
</comment>
<comment type="similarity">
    <text evidence="4">Belongs to the CTL (choline transporter-like) family.</text>
</comment>
<dbReference type="EMBL" id="AAAB01008849">
    <property type="protein sequence ID" value="EAA07143.5"/>
    <property type="molecule type" value="Genomic_DNA"/>
</dbReference>
<dbReference type="RefSeq" id="XP_311599.4">
    <property type="nucleotide sequence ID" value="XM_311599.4"/>
</dbReference>
<dbReference type="SMR" id="Q7PRJ0"/>
<dbReference type="FunCoup" id="Q7PRJ0">
    <property type="interactions" value="310"/>
</dbReference>
<dbReference type="STRING" id="7165.Q7PRJ0"/>
<dbReference type="GlyCosmos" id="Q7PRJ0">
    <property type="glycosylation" value="4 sites, No reported glycans"/>
</dbReference>
<dbReference type="PaxDb" id="7165-AGAP010343-PC"/>
<dbReference type="VEuPathDB" id="VectorBase:AGAMI1_014793"/>
<dbReference type="VEuPathDB" id="VectorBase:AGAP010343"/>
<dbReference type="eggNOG" id="KOG1362">
    <property type="taxonomic scope" value="Eukaryota"/>
</dbReference>
<dbReference type="HOGENOM" id="CLU_017181_3_1_1"/>
<dbReference type="InParanoid" id="Q7PRJ0"/>
<dbReference type="PhylomeDB" id="Q7PRJ0"/>
<dbReference type="Proteomes" id="UP000007062">
    <property type="component" value="Chromosome 3L"/>
</dbReference>
<dbReference type="GO" id="GO:0016020">
    <property type="term" value="C:membrane"/>
    <property type="evidence" value="ECO:0000318"/>
    <property type="project" value="GO_Central"/>
</dbReference>
<dbReference type="GO" id="GO:0022857">
    <property type="term" value="F:transmembrane transporter activity"/>
    <property type="evidence" value="ECO:0000318"/>
    <property type="project" value="GO_Central"/>
</dbReference>
<dbReference type="GO" id="GO:0055085">
    <property type="term" value="P:transmembrane transport"/>
    <property type="evidence" value="ECO:0000318"/>
    <property type="project" value="GO_Central"/>
</dbReference>
<dbReference type="InterPro" id="IPR007603">
    <property type="entry name" value="Choline_transptr-like"/>
</dbReference>
<dbReference type="PANTHER" id="PTHR12385">
    <property type="entry name" value="CHOLINE TRANSPORTER-LIKE (SLC FAMILY 44)"/>
    <property type="match status" value="1"/>
</dbReference>
<dbReference type="PANTHER" id="PTHR12385:SF14">
    <property type="entry name" value="CHOLINE TRANSPORTER-LIKE 2"/>
    <property type="match status" value="1"/>
</dbReference>
<dbReference type="Pfam" id="PF04515">
    <property type="entry name" value="Choline_transpo"/>
    <property type="match status" value="1"/>
</dbReference>
<feature type="chain" id="PRO_0000359733" description="Choline transporter-like 2">
    <location>
        <begin position="1"/>
        <end position="790"/>
    </location>
</feature>
<feature type="transmembrane region" description="Helical" evidence="3">
    <location>
        <begin position="47"/>
        <end position="67"/>
    </location>
</feature>
<feature type="transmembrane region" description="Helical" evidence="3">
    <location>
        <begin position="288"/>
        <end position="308"/>
    </location>
</feature>
<feature type="transmembrane region" description="Helical" evidence="3">
    <location>
        <begin position="319"/>
        <end position="339"/>
    </location>
</feature>
<feature type="transmembrane region" description="Helical" evidence="3">
    <location>
        <begin position="344"/>
        <end position="364"/>
    </location>
</feature>
<feature type="transmembrane region" description="Helical" evidence="3">
    <location>
        <begin position="400"/>
        <end position="420"/>
    </location>
</feature>
<feature type="transmembrane region" description="Helical" evidence="3">
    <location>
        <begin position="449"/>
        <end position="469"/>
    </location>
</feature>
<feature type="transmembrane region" description="Helical" evidence="3">
    <location>
        <begin position="545"/>
        <end position="565"/>
    </location>
</feature>
<feature type="transmembrane region" description="Helical" evidence="3">
    <location>
        <begin position="592"/>
        <end position="612"/>
    </location>
</feature>
<feature type="transmembrane region" description="Helical" evidence="3">
    <location>
        <begin position="691"/>
        <end position="711"/>
    </location>
</feature>
<feature type="transmembrane region" description="Helical" evidence="3">
    <location>
        <begin position="728"/>
        <end position="748"/>
    </location>
</feature>
<feature type="glycosylation site" description="N-linked (GlcNAc...) asparagine" evidence="3">
    <location>
        <position position="102"/>
    </location>
</feature>
<feature type="glycosylation site" description="N-linked (GlcNAc...) asparagine" evidence="3">
    <location>
        <position position="259"/>
    </location>
</feature>
<feature type="glycosylation site" description="N-linked (GlcNAc...) asparagine" evidence="3">
    <location>
        <position position="384"/>
    </location>
</feature>
<feature type="glycosylation site" description="N-linked (GlcNAc...) asparagine" evidence="3">
    <location>
        <position position="483"/>
    </location>
</feature>
<proteinExistence type="inferred from homology"/>